<comment type="function">
    <text evidence="1">Participates in various redox reactions through the reversible oxidation of its active center dithiol to a disulfide and catalyzes dithiol-disulfide exchange reactions.</text>
</comment>
<comment type="similarity">
    <text evidence="5">Belongs to the thioredoxin family.</text>
</comment>
<proteinExistence type="evidence at protein level"/>
<name>THIO_MYCTU</name>
<keyword id="KW-0002">3D-structure</keyword>
<keyword id="KW-0903">Direct protein sequencing</keyword>
<keyword id="KW-1015">Disulfide bond</keyword>
<keyword id="KW-0249">Electron transport</keyword>
<keyword id="KW-0676">Redox-active center</keyword>
<keyword id="KW-1185">Reference proteome</keyword>
<keyword id="KW-0813">Transport</keyword>
<reference key="1">
    <citation type="submission" date="1996-03" db="EMBL/GenBank/DDBJ databases">
        <title>Sequence analysis and functional characterization of thioredoxin and thioredoxin reductase of Mycobacterium tuberculosis.</title>
        <authorList>
            <person name="Wieles B."/>
            <person name="Phillip W."/>
            <person name="Drijfhout J.W."/>
            <person name="Offringa R."/>
            <person name="Ottenhoff T.H.M."/>
        </authorList>
    </citation>
    <scope>NUCLEOTIDE SEQUENCE [GENOMIC DNA]</scope>
</reference>
<reference key="2">
    <citation type="journal article" date="1998" name="Nature">
        <title>Deciphering the biology of Mycobacterium tuberculosis from the complete genome sequence.</title>
        <authorList>
            <person name="Cole S.T."/>
            <person name="Brosch R."/>
            <person name="Parkhill J."/>
            <person name="Garnier T."/>
            <person name="Churcher C.M."/>
            <person name="Harris D.E."/>
            <person name="Gordon S.V."/>
            <person name="Eiglmeier K."/>
            <person name="Gas S."/>
            <person name="Barry C.E. III"/>
            <person name="Tekaia F."/>
            <person name="Badcock K."/>
            <person name="Basham D."/>
            <person name="Brown D."/>
            <person name="Chillingworth T."/>
            <person name="Connor R."/>
            <person name="Davies R.M."/>
            <person name="Devlin K."/>
            <person name="Feltwell T."/>
            <person name="Gentles S."/>
            <person name="Hamlin N."/>
            <person name="Holroyd S."/>
            <person name="Hornsby T."/>
            <person name="Jagels K."/>
            <person name="Krogh A."/>
            <person name="McLean J."/>
            <person name="Moule S."/>
            <person name="Murphy L.D."/>
            <person name="Oliver S."/>
            <person name="Osborne J."/>
            <person name="Quail M.A."/>
            <person name="Rajandream M.A."/>
            <person name="Rogers J."/>
            <person name="Rutter S."/>
            <person name="Seeger K."/>
            <person name="Skelton S."/>
            <person name="Squares S."/>
            <person name="Squares R."/>
            <person name="Sulston J.E."/>
            <person name="Taylor K."/>
            <person name="Whitehead S."/>
            <person name="Barrell B.G."/>
        </authorList>
    </citation>
    <scope>NUCLEOTIDE SEQUENCE [LARGE SCALE GENOMIC DNA]</scope>
    <source>
        <strain>ATCC 25618 / H37Rv</strain>
    </source>
</reference>
<reference key="3">
    <citation type="journal article" date="1995" name="Infect. Immun.">
        <title>Identification and functional characterization of thioredoxin of Mycobacterium tuberculosis.</title>
        <authorList>
            <person name="Wieles B."/>
            <person name="Nagai S."/>
            <person name="Wiker H.G."/>
            <person name="Harboe M."/>
            <person name="Ottenhoff T.H.M."/>
        </authorList>
    </citation>
    <scope>PROTEIN SEQUENCE OF 2-21</scope>
</reference>
<reference key="4">
    <citation type="journal article" date="2011" name="Mol. Cell. Proteomics">
        <title>Proteogenomic analysis of Mycobacterium tuberculosis by high resolution mass spectrometry.</title>
        <authorList>
            <person name="Kelkar D.S."/>
            <person name="Kumar D."/>
            <person name="Kumar P."/>
            <person name="Balakrishnan L."/>
            <person name="Muthusamy B."/>
            <person name="Yadav A.K."/>
            <person name="Shrivastava P."/>
            <person name="Marimuthu A."/>
            <person name="Anand S."/>
            <person name="Sundaram H."/>
            <person name="Kingsbury R."/>
            <person name="Harsha H.C."/>
            <person name="Nair B."/>
            <person name="Prasad T.S."/>
            <person name="Chauhan D.S."/>
            <person name="Katoch K."/>
            <person name="Katoch V.M."/>
            <person name="Kumar P."/>
            <person name="Chaerkady R."/>
            <person name="Ramachandran S."/>
            <person name="Dash D."/>
            <person name="Pandey A."/>
        </authorList>
    </citation>
    <scope>IDENTIFICATION BY MASS SPECTROMETRY [LARGE SCALE ANALYSIS]</scope>
    <source>
        <strain>ATCC 25618 / H37Rv</strain>
    </source>
</reference>
<reference key="5">
    <citation type="journal article" date="2006" name="Acta Crystallogr. D">
        <title>Structure of Mycobacterium tuberculosis thioredoxin C.</title>
        <authorList>
            <person name="Hall G."/>
            <person name="Shah M."/>
            <person name="McEwan P.A."/>
            <person name="Laughton C."/>
            <person name="Stevens M."/>
            <person name="Westwell A."/>
            <person name="Emsley J."/>
        </authorList>
    </citation>
    <scope>X-RAY CRYSTALLOGRAPHY (1.3 ANGSTROMS)</scope>
    <scope>DISULFIDE BOND</scope>
</reference>
<protein>
    <recommendedName>
        <fullName>Thioredoxin</fullName>
        <shortName>Trx</shortName>
    </recommendedName>
    <alternativeName>
        <fullName>MPT46</fullName>
    </alternativeName>
</protein>
<sequence length="116" mass="12544">MTDSEKSATIKVTDASFATDVLSSNKPVLVDFWATWCGPCKMVAPVLEEIATERATDLTVAKLDVDTNPETARNFQVVSIPTLILFKDGQPVKRIVGAKGKAALLRELSDVVPNLN</sequence>
<gene>
    <name type="primary">trxA</name>
    <name type="synonym">trx</name>
    <name type="synonym">trxC</name>
    <name type="ordered locus">Rv3914</name>
    <name type="ORF">MTV028.05</name>
</gene>
<organism>
    <name type="scientific">Mycobacterium tuberculosis (strain ATCC 25618 / H37Rv)</name>
    <dbReference type="NCBI Taxonomy" id="83332"/>
    <lineage>
        <taxon>Bacteria</taxon>
        <taxon>Bacillati</taxon>
        <taxon>Actinomycetota</taxon>
        <taxon>Actinomycetes</taxon>
        <taxon>Mycobacteriales</taxon>
        <taxon>Mycobacteriaceae</taxon>
        <taxon>Mycobacterium</taxon>
        <taxon>Mycobacterium tuberculosis complex</taxon>
    </lineage>
</organism>
<evidence type="ECO:0000250" key="1"/>
<evidence type="ECO:0000255" key="2">
    <source>
        <dbReference type="PROSITE-ProRule" id="PRU00691"/>
    </source>
</evidence>
<evidence type="ECO:0000269" key="3">
    <source>
    </source>
</evidence>
<evidence type="ECO:0000269" key="4">
    <source>
    </source>
</evidence>
<evidence type="ECO:0000305" key="5"/>
<evidence type="ECO:0007829" key="6">
    <source>
        <dbReference type="PDB" id="2I1U"/>
    </source>
</evidence>
<evidence type="ECO:0007829" key="7">
    <source>
        <dbReference type="PDB" id="2L59"/>
    </source>
</evidence>
<evidence type="ECO:0007829" key="8">
    <source>
        <dbReference type="PDB" id="3O6T"/>
    </source>
</evidence>
<dbReference type="EMBL" id="X95798">
    <property type="protein sequence ID" value="CAA65071.1"/>
    <property type="molecule type" value="Genomic_DNA"/>
</dbReference>
<dbReference type="EMBL" id="AL123456">
    <property type="protein sequence ID" value="CCP46743.1"/>
    <property type="molecule type" value="Genomic_DNA"/>
</dbReference>
<dbReference type="PIR" id="B70851">
    <property type="entry name" value="B70851"/>
</dbReference>
<dbReference type="RefSeq" id="NP_218431.1">
    <property type="nucleotide sequence ID" value="NC_000962.3"/>
</dbReference>
<dbReference type="RefSeq" id="WP_003400164.1">
    <property type="nucleotide sequence ID" value="NZ_NVQJ01000005.1"/>
</dbReference>
<dbReference type="PDB" id="2I1U">
    <property type="method" value="X-ray"/>
    <property type="resolution" value="1.30 A"/>
    <property type="chains" value="A=1-116"/>
</dbReference>
<dbReference type="PDB" id="2L4Q">
    <property type="method" value="NMR"/>
    <property type="chains" value="A=1-116"/>
</dbReference>
<dbReference type="PDB" id="2L59">
    <property type="method" value="NMR"/>
    <property type="chains" value="A=1-116"/>
</dbReference>
<dbReference type="PDB" id="3O6T">
    <property type="method" value="X-ray"/>
    <property type="resolution" value="2.40 A"/>
    <property type="chains" value="A/B/C/D=1-116"/>
</dbReference>
<dbReference type="PDBsum" id="2I1U"/>
<dbReference type="PDBsum" id="2L4Q"/>
<dbReference type="PDBsum" id="2L59"/>
<dbReference type="PDBsum" id="3O6T"/>
<dbReference type="BMRB" id="P9WG67"/>
<dbReference type="SMR" id="P9WG67"/>
<dbReference type="FunCoup" id="P9WG67">
    <property type="interactions" value="424"/>
</dbReference>
<dbReference type="STRING" id="83332.Rv3914"/>
<dbReference type="PaxDb" id="83332-Rv3914"/>
<dbReference type="DNASU" id="886241"/>
<dbReference type="GeneID" id="45427914"/>
<dbReference type="GeneID" id="886241"/>
<dbReference type="KEGG" id="mtu:Rv3914"/>
<dbReference type="KEGG" id="mtv:RVBD_3914"/>
<dbReference type="TubercuList" id="Rv3914"/>
<dbReference type="eggNOG" id="COG3118">
    <property type="taxonomic scope" value="Bacteria"/>
</dbReference>
<dbReference type="InParanoid" id="P9WG67"/>
<dbReference type="OrthoDB" id="9790390at2"/>
<dbReference type="PhylomeDB" id="P9WG67"/>
<dbReference type="Reactome" id="R-HSA-1222538">
    <property type="pathway name" value="Tolerance by Mtb to nitric oxide produced by macrophages"/>
</dbReference>
<dbReference type="Reactome" id="R-HSA-1222541">
    <property type="pathway name" value="Cell redox homeostasis"/>
</dbReference>
<dbReference type="Reactome" id="R-MTU-936721">
    <property type="pathway name" value="Cysteine synthesis from O-acetylserine"/>
</dbReference>
<dbReference type="EvolutionaryTrace" id="P9WG67"/>
<dbReference type="Proteomes" id="UP000001584">
    <property type="component" value="Chromosome"/>
</dbReference>
<dbReference type="GO" id="GO:0005737">
    <property type="term" value="C:cytoplasm"/>
    <property type="evidence" value="ECO:0000318"/>
    <property type="project" value="GO_Central"/>
</dbReference>
<dbReference type="GO" id="GO:0005829">
    <property type="term" value="C:cytosol"/>
    <property type="evidence" value="ECO:0007005"/>
    <property type="project" value="MTBBASE"/>
</dbReference>
<dbReference type="GO" id="GO:0005576">
    <property type="term" value="C:extracellular region"/>
    <property type="evidence" value="ECO:0007005"/>
    <property type="project" value="MTBBASE"/>
</dbReference>
<dbReference type="GO" id="GO:0009274">
    <property type="term" value="C:peptidoglycan-based cell wall"/>
    <property type="evidence" value="ECO:0007005"/>
    <property type="project" value="MTBBASE"/>
</dbReference>
<dbReference type="GO" id="GO:0005886">
    <property type="term" value="C:plasma membrane"/>
    <property type="evidence" value="ECO:0007005"/>
    <property type="project" value="MTBBASE"/>
</dbReference>
<dbReference type="GO" id="GO:0015036">
    <property type="term" value="F:disulfide oxidoreductase activity"/>
    <property type="evidence" value="ECO:0000314"/>
    <property type="project" value="MTBBASE"/>
</dbReference>
<dbReference type="GO" id="GO:0009055">
    <property type="term" value="F:electron transfer activity"/>
    <property type="evidence" value="ECO:0000314"/>
    <property type="project" value="MTBBASE"/>
</dbReference>
<dbReference type="GO" id="GO:0015038">
    <property type="term" value="F:glutathione disulfide oxidoreductase activity"/>
    <property type="evidence" value="ECO:0000314"/>
    <property type="project" value="GO_Central"/>
</dbReference>
<dbReference type="GO" id="GO:0015035">
    <property type="term" value="F:protein-disulfide reductase activity"/>
    <property type="evidence" value="ECO:0000314"/>
    <property type="project" value="MTBBASE"/>
</dbReference>
<dbReference type="GO" id="GO:0045454">
    <property type="term" value="P:cell redox homeostasis"/>
    <property type="evidence" value="ECO:0000314"/>
    <property type="project" value="MTBBASE"/>
</dbReference>
<dbReference type="CDD" id="cd02947">
    <property type="entry name" value="TRX_family"/>
    <property type="match status" value="1"/>
</dbReference>
<dbReference type="FunFam" id="3.40.30.10:FF:000001">
    <property type="entry name" value="Thioredoxin"/>
    <property type="match status" value="1"/>
</dbReference>
<dbReference type="Gene3D" id="3.40.30.10">
    <property type="entry name" value="Glutaredoxin"/>
    <property type="match status" value="1"/>
</dbReference>
<dbReference type="InterPro" id="IPR005746">
    <property type="entry name" value="Thioredoxin"/>
</dbReference>
<dbReference type="InterPro" id="IPR036249">
    <property type="entry name" value="Thioredoxin-like_sf"/>
</dbReference>
<dbReference type="InterPro" id="IPR017937">
    <property type="entry name" value="Thioredoxin_CS"/>
</dbReference>
<dbReference type="InterPro" id="IPR013766">
    <property type="entry name" value="Thioredoxin_domain"/>
</dbReference>
<dbReference type="NCBIfam" id="TIGR01068">
    <property type="entry name" value="thioredoxin"/>
    <property type="match status" value="1"/>
</dbReference>
<dbReference type="PANTHER" id="PTHR45663">
    <property type="entry name" value="GEO12009P1"/>
    <property type="match status" value="1"/>
</dbReference>
<dbReference type="PANTHER" id="PTHR45663:SF11">
    <property type="entry name" value="GEO12009P1"/>
    <property type="match status" value="1"/>
</dbReference>
<dbReference type="Pfam" id="PF00085">
    <property type="entry name" value="Thioredoxin"/>
    <property type="match status" value="1"/>
</dbReference>
<dbReference type="PIRSF" id="PIRSF000077">
    <property type="entry name" value="Thioredoxin"/>
    <property type="match status" value="1"/>
</dbReference>
<dbReference type="PRINTS" id="PR00421">
    <property type="entry name" value="THIOREDOXIN"/>
</dbReference>
<dbReference type="SUPFAM" id="SSF52833">
    <property type="entry name" value="Thioredoxin-like"/>
    <property type="match status" value="1"/>
</dbReference>
<dbReference type="PROSITE" id="PS00194">
    <property type="entry name" value="THIOREDOXIN_1"/>
    <property type="match status" value="1"/>
</dbReference>
<dbReference type="PROSITE" id="PS51352">
    <property type="entry name" value="THIOREDOXIN_2"/>
    <property type="match status" value="1"/>
</dbReference>
<accession>P9WG67</accession>
<accession>L0TDX8</accession>
<accession>P0A616</accession>
<accession>P52229</accession>
<feature type="initiator methionine" description="Removed" evidence="4">
    <location>
        <position position="1"/>
    </location>
</feature>
<feature type="chain" id="PRO_0000120117" description="Thioredoxin">
    <location>
        <begin position="2"/>
        <end position="116"/>
    </location>
</feature>
<feature type="domain" description="Thioredoxin" evidence="2">
    <location>
        <begin position="2"/>
        <end position="113"/>
    </location>
</feature>
<feature type="disulfide bond" description="Redox-active" evidence="2 3">
    <location>
        <begin position="37"/>
        <end position="40"/>
    </location>
</feature>
<feature type="turn" evidence="7">
    <location>
        <begin position="3"/>
        <end position="5"/>
    </location>
</feature>
<feature type="strand" evidence="6">
    <location>
        <begin position="9"/>
        <end position="11"/>
    </location>
</feature>
<feature type="turn" evidence="6">
    <location>
        <begin position="14"/>
        <end position="16"/>
    </location>
</feature>
<feature type="helix" evidence="6">
    <location>
        <begin position="17"/>
        <end position="20"/>
    </location>
</feature>
<feature type="turn" evidence="6">
    <location>
        <begin position="21"/>
        <end position="23"/>
    </location>
</feature>
<feature type="strand" evidence="6">
    <location>
        <begin position="28"/>
        <end position="33"/>
    </location>
</feature>
<feature type="helix" evidence="6">
    <location>
        <begin position="38"/>
        <end position="53"/>
    </location>
</feature>
<feature type="turn" evidence="6">
    <location>
        <begin position="54"/>
        <end position="57"/>
    </location>
</feature>
<feature type="strand" evidence="6">
    <location>
        <begin position="59"/>
        <end position="64"/>
    </location>
</feature>
<feature type="turn" evidence="6">
    <location>
        <begin position="65"/>
        <end position="67"/>
    </location>
</feature>
<feature type="helix" evidence="6">
    <location>
        <begin position="69"/>
        <end position="74"/>
    </location>
</feature>
<feature type="strand" evidence="6">
    <location>
        <begin position="79"/>
        <end position="87"/>
    </location>
</feature>
<feature type="strand" evidence="6">
    <location>
        <begin position="90"/>
        <end position="97"/>
    </location>
</feature>
<feature type="helix" evidence="6">
    <location>
        <begin position="101"/>
        <end position="107"/>
    </location>
</feature>
<feature type="turn" evidence="8">
    <location>
        <begin position="109"/>
        <end position="111"/>
    </location>
</feature>